<gene>
    <name evidence="1" type="primary">atpH</name>
    <name type="ordered locus">jk1338</name>
</gene>
<dbReference type="EMBL" id="CR931997">
    <property type="protein sequence ID" value="CAI37510.1"/>
    <property type="molecule type" value="Genomic_DNA"/>
</dbReference>
<dbReference type="RefSeq" id="WP_011273821.1">
    <property type="nucleotide sequence ID" value="NC_007164.1"/>
</dbReference>
<dbReference type="SMR" id="Q4JUJ7"/>
<dbReference type="STRING" id="306537.jk1338"/>
<dbReference type="KEGG" id="cjk:jk1338"/>
<dbReference type="PATRIC" id="fig|306537.10.peg.1358"/>
<dbReference type="eggNOG" id="COG0712">
    <property type="taxonomic scope" value="Bacteria"/>
</dbReference>
<dbReference type="HOGENOM" id="CLU_088880_0_0_11"/>
<dbReference type="OrthoDB" id="5242917at2"/>
<dbReference type="Proteomes" id="UP000000545">
    <property type="component" value="Chromosome"/>
</dbReference>
<dbReference type="GO" id="GO:0005886">
    <property type="term" value="C:plasma membrane"/>
    <property type="evidence" value="ECO:0007669"/>
    <property type="project" value="UniProtKB-SubCell"/>
</dbReference>
<dbReference type="GO" id="GO:0045259">
    <property type="term" value="C:proton-transporting ATP synthase complex"/>
    <property type="evidence" value="ECO:0007669"/>
    <property type="project" value="UniProtKB-KW"/>
</dbReference>
<dbReference type="GO" id="GO:0046933">
    <property type="term" value="F:proton-transporting ATP synthase activity, rotational mechanism"/>
    <property type="evidence" value="ECO:0007669"/>
    <property type="project" value="UniProtKB-UniRule"/>
</dbReference>
<dbReference type="Gene3D" id="1.10.520.20">
    <property type="entry name" value="N-terminal domain of the delta subunit of the F1F0-ATP synthase"/>
    <property type="match status" value="1"/>
</dbReference>
<dbReference type="HAMAP" id="MF_01416">
    <property type="entry name" value="ATP_synth_delta_bact"/>
    <property type="match status" value="1"/>
</dbReference>
<dbReference type="InterPro" id="IPR026015">
    <property type="entry name" value="ATP_synth_OSCP/delta_N_sf"/>
</dbReference>
<dbReference type="InterPro" id="IPR020781">
    <property type="entry name" value="ATPase_OSCP/d_CS"/>
</dbReference>
<dbReference type="InterPro" id="IPR000711">
    <property type="entry name" value="ATPase_OSCP/dsu"/>
</dbReference>
<dbReference type="NCBIfam" id="TIGR01145">
    <property type="entry name" value="ATP_synt_delta"/>
    <property type="match status" value="1"/>
</dbReference>
<dbReference type="NCBIfam" id="NF009967">
    <property type="entry name" value="PRK13430.1"/>
    <property type="match status" value="1"/>
</dbReference>
<dbReference type="PANTHER" id="PTHR11910">
    <property type="entry name" value="ATP SYNTHASE DELTA CHAIN"/>
    <property type="match status" value="1"/>
</dbReference>
<dbReference type="Pfam" id="PF00213">
    <property type="entry name" value="OSCP"/>
    <property type="match status" value="1"/>
</dbReference>
<dbReference type="PRINTS" id="PR00125">
    <property type="entry name" value="ATPASEDELTA"/>
</dbReference>
<dbReference type="PROSITE" id="PS00389">
    <property type="entry name" value="ATPASE_DELTA"/>
    <property type="match status" value="1"/>
</dbReference>
<protein>
    <recommendedName>
        <fullName evidence="1">ATP synthase subunit delta</fullName>
    </recommendedName>
    <alternativeName>
        <fullName evidence="1">ATP synthase F(1) sector subunit delta</fullName>
    </alternativeName>
    <alternativeName>
        <fullName evidence="1">F-type ATPase subunit delta</fullName>
        <shortName evidence="1">F-ATPase subunit delta</shortName>
    </alternativeName>
</protein>
<feature type="chain" id="PRO_0000382091" description="ATP synthase subunit delta">
    <location>
        <begin position="1"/>
        <end position="272"/>
    </location>
</feature>
<keyword id="KW-0066">ATP synthesis</keyword>
<keyword id="KW-1003">Cell membrane</keyword>
<keyword id="KW-0139">CF(1)</keyword>
<keyword id="KW-0375">Hydrogen ion transport</keyword>
<keyword id="KW-0406">Ion transport</keyword>
<keyword id="KW-0472">Membrane</keyword>
<keyword id="KW-1185">Reference proteome</keyword>
<keyword id="KW-0813">Transport</keyword>
<organism>
    <name type="scientific">Corynebacterium jeikeium (strain K411)</name>
    <dbReference type="NCBI Taxonomy" id="306537"/>
    <lineage>
        <taxon>Bacteria</taxon>
        <taxon>Bacillati</taxon>
        <taxon>Actinomycetota</taxon>
        <taxon>Actinomycetes</taxon>
        <taxon>Mycobacteriales</taxon>
        <taxon>Corynebacteriaceae</taxon>
        <taxon>Corynebacterium</taxon>
    </lineage>
</organism>
<sequence>MHAASREALERLEQTLDQGLNETSDKVGTGVNTGTELFDVVELLDSDRGLRVALIDPARDTNTRVELAKSLFGGKVSASTEEIVSAAVSQSWSNTRDLRDGLVKLGRLALLRAADAQGQQDRVEDELFQLARIIEREPELELKLADRAASPDARRDLLAKVLYGKVTSTTEALALQAIGRLRQRPVEELDSLVDEVAALEGRTVARVRAAAALGEQQKSTLSDKLEKIYGRKIAVHSEVDTSLLGGAVIRVGHEVIDGSTAGNLRRLRASIA</sequence>
<evidence type="ECO:0000255" key="1">
    <source>
        <dbReference type="HAMAP-Rule" id="MF_01416"/>
    </source>
</evidence>
<reference key="1">
    <citation type="journal article" date="2005" name="J. Bacteriol.">
        <title>Complete genome sequence and analysis of the multiresistant nosocomial pathogen Corynebacterium jeikeium K411, a lipid-requiring bacterium of the human skin flora.</title>
        <authorList>
            <person name="Tauch A."/>
            <person name="Kaiser O."/>
            <person name="Hain T."/>
            <person name="Goesmann A."/>
            <person name="Weisshaar B."/>
            <person name="Albersmeier A."/>
            <person name="Bekel T."/>
            <person name="Bischoff N."/>
            <person name="Brune I."/>
            <person name="Chakraborty T."/>
            <person name="Kalinowski J."/>
            <person name="Meyer F."/>
            <person name="Rupp O."/>
            <person name="Schneiker S."/>
            <person name="Viehoever P."/>
            <person name="Puehler A."/>
        </authorList>
    </citation>
    <scope>NUCLEOTIDE SEQUENCE [LARGE SCALE GENOMIC DNA]</scope>
    <source>
        <strain>K411</strain>
    </source>
</reference>
<accession>Q4JUJ7</accession>
<proteinExistence type="inferred from homology"/>
<comment type="function">
    <text evidence="1">F(1)F(0) ATP synthase produces ATP from ADP in the presence of a proton or sodium gradient. F-type ATPases consist of two structural domains, F(1) containing the extramembraneous catalytic core and F(0) containing the membrane proton channel, linked together by a central stalk and a peripheral stalk. During catalysis, ATP synthesis in the catalytic domain of F(1) is coupled via a rotary mechanism of the central stalk subunits to proton translocation.</text>
</comment>
<comment type="function">
    <text evidence="1">This protein is part of the stalk that links CF(0) to CF(1). It either transmits conformational changes from CF(0) to CF(1) or is implicated in proton conduction.</text>
</comment>
<comment type="subunit">
    <text evidence="1">F-type ATPases have 2 components, F(1) - the catalytic core - and F(0) - the membrane proton channel. F(1) has five subunits: alpha(3), beta(3), gamma(1), delta(1), epsilon(1). F(0) has three main subunits: a(1), b(2) and c(10-14). The alpha and beta chains form an alternating ring which encloses part of the gamma chain. F(1) is attached to F(0) by a central stalk formed by the gamma and epsilon chains, while a peripheral stalk is formed by the delta and b chains.</text>
</comment>
<comment type="subcellular location">
    <subcellularLocation>
        <location evidence="1">Cell membrane</location>
        <topology evidence="1">Peripheral membrane protein</topology>
    </subcellularLocation>
</comment>
<comment type="similarity">
    <text evidence="1">Belongs to the ATPase delta chain family.</text>
</comment>
<name>ATPD_CORJK</name>